<organism>
    <name type="scientific">Rickettsia prowazekii (strain Madrid E)</name>
    <dbReference type="NCBI Taxonomy" id="272947"/>
    <lineage>
        <taxon>Bacteria</taxon>
        <taxon>Pseudomonadati</taxon>
        <taxon>Pseudomonadota</taxon>
        <taxon>Alphaproteobacteria</taxon>
        <taxon>Rickettsiales</taxon>
        <taxon>Rickettsiaceae</taxon>
        <taxon>Rickettsieae</taxon>
        <taxon>Rickettsia</taxon>
        <taxon>typhus group</taxon>
    </lineage>
</organism>
<reference key="1">
    <citation type="journal article" date="1993" name="Gene">
        <title>Characterization of the gene coding for the Rickettsia prowazekii DNA primase analogue.</title>
        <authorList>
            <person name="Marks G.L."/>
            <person name="Wood D.O."/>
        </authorList>
    </citation>
    <scope>NUCLEOTIDE SEQUENCE [GENOMIC DNA]</scope>
    <source>
        <strain>Madrid E</strain>
    </source>
</reference>
<reference key="2">
    <citation type="journal article" date="1998" name="Nature">
        <title>The genome sequence of Rickettsia prowazekii and the origin of mitochondria.</title>
        <authorList>
            <person name="Andersson S.G.E."/>
            <person name="Zomorodipour A."/>
            <person name="Andersson J.O."/>
            <person name="Sicheritz-Ponten T."/>
            <person name="Alsmark U.C.M."/>
            <person name="Podowski R.M."/>
            <person name="Naeslund A.K."/>
            <person name="Eriksson A.-S."/>
            <person name="Winkler H.H."/>
            <person name="Kurland C.G."/>
        </authorList>
    </citation>
    <scope>NUCLEOTIDE SEQUENCE [LARGE SCALE GENOMIC DNA]</scope>
    <source>
        <strain>Madrid E</strain>
    </source>
</reference>
<name>DNAG_RICPR</name>
<comment type="function">
    <text evidence="1">RNA polymerase that catalyzes the synthesis of short RNA molecules used as primers for DNA polymerase during DNA replication.</text>
</comment>
<comment type="catalytic activity">
    <reaction evidence="1">
        <text>ssDNA + n NTP = ssDNA/pppN(pN)n-1 hybrid + (n-1) diphosphate.</text>
        <dbReference type="EC" id="2.7.7.101"/>
    </reaction>
</comment>
<comment type="cofactor">
    <cofactor evidence="1">
        <name>Zn(2+)</name>
        <dbReference type="ChEBI" id="CHEBI:29105"/>
    </cofactor>
    <text evidence="1">Binds 1 zinc ion per monomer.</text>
</comment>
<comment type="cofactor">
    <cofactor evidence="1">
        <name>Mg(2+)</name>
        <dbReference type="ChEBI" id="CHEBI:18420"/>
    </cofactor>
    <text evidence="1">Binds two Mg(2+) per subunit.</text>
</comment>
<comment type="subunit">
    <text evidence="1">Monomer. Interacts with DnaB.</text>
</comment>
<comment type="domain">
    <text evidence="1">Contains an N-terminal zinc-binding domain, a central core domain that contains the primase activity, and a C-terminal DnaB-binding domain.</text>
</comment>
<comment type="similarity">
    <text evidence="1">Belongs to the DnaG primase family.</text>
</comment>
<comment type="sequence caution" evidence="2">
    <conflict type="erroneous initiation">
        <sequence resource="EMBL-CDS" id="CAA15283"/>
    </conflict>
    <text>Extended N-terminus.</text>
</comment>
<protein>
    <recommendedName>
        <fullName evidence="1">DNA primase</fullName>
        <ecNumber evidence="1">2.7.7.101</ecNumber>
    </recommendedName>
</protein>
<feature type="chain" id="PRO_0000180515" description="DNA primase">
    <location>
        <begin position="1"/>
        <end position="593"/>
    </location>
</feature>
<feature type="domain" description="Toprim" evidence="1">
    <location>
        <begin position="250"/>
        <end position="332"/>
    </location>
</feature>
<feature type="zinc finger region" description="CHC2-type" evidence="1">
    <location>
        <begin position="38"/>
        <end position="62"/>
    </location>
</feature>
<feature type="binding site" evidence="1">
    <location>
        <position position="256"/>
    </location>
    <ligand>
        <name>Mg(2+)</name>
        <dbReference type="ChEBI" id="CHEBI:18420"/>
        <label>1</label>
        <note>catalytic</note>
    </ligand>
</feature>
<feature type="binding site" evidence="1">
    <location>
        <position position="300"/>
    </location>
    <ligand>
        <name>Mg(2+)</name>
        <dbReference type="ChEBI" id="CHEBI:18420"/>
        <label>1</label>
        <note>catalytic</note>
    </ligand>
</feature>
<feature type="binding site" evidence="1">
    <location>
        <position position="300"/>
    </location>
    <ligand>
        <name>Mg(2+)</name>
        <dbReference type="ChEBI" id="CHEBI:18420"/>
        <label>2</label>
    </ligand>
</feature>
<feature type="binding site" evidence="1">
    <location>
        <position position="302"/>
    </location>
    <ligand>
        <name>Mg(2+)</name>
        <dbReference type="ChEBI" id="CHEBI:18420"/>
        <label>2</label>
    </ligand>
</feature>
<sequence length="593" mass="68684">MRVTQEFYEFLRNRINISDVVRQKLALTRKSSNYVGLCPFHQEKTPSFTVSDSKRFFYCFGCKASGDVIKFTSNISGLSYNESAIKLANDYGIEIPKLTVKQKEFYEESDNILNILELANKFFRTQLTPEILNYLYKRNITETTIKEFSIGFAPRNNKFEKFFLDKKIDITKLGQAGLIGKCKNGKIYNLFSNRITIPIRNIYNKIVGFGGRVLGNELPKYLNSFETIVFQKSDILYGEHKAISSSYKKNRSILVEGYFDVIALHQAGFNEVVASLGTSVTESHLHKLWRAGDEIILCLDGDNAGIKASIRTINLALPLVNSEKKISFIRLPSGLDPDDAVNKNGADFFAKLIDKRISLSEMIWHIEYSGKNFRTAEEKANLEKNLKDYCNKISDSNLKASYYRFFKDQIWQNLVTKQKKIITPSSNSVLIASSHCYSELEMLEHAFCALLIKFPIMFAEKDIRDFILNLNFNNKSLEEFRNWYLNEIIDNKVKENEITAIVEKTSFFDIFLLLSKADNLFLDISFNKNNIRLDLLWQWLYKKYYLINLQQEYAISINSNHDFEKVLLYKKEIIKIVNELQVLNESFINQTIT</sequence>
<keyword id="KW-0235">DNA replication</keyword>
<keyword id="KW-0238">DNA-binding</keyword>
<keyword id="KW-0240">DNA-directed RNA polymerase</keyword>
<keyword id="KW-0460">Magnesium</keyword>
<keyword id="KW-0479">Metal-binding</keyword>
<keyword id="KW-0548">Nucleotidyltransferase</keyword>
<keyword id="KW-0639">Primosome</keyword>
<keyword id="KW-1185">Reference proteome</keyword>
<keyword id="KW-0804">Transcription</keyword>
<keyword id="KW-0808">Transferase</keyword>
<keyword id="KW-0862">Zinc</keyword>
<keyword id="KW-0863">Zinc-finger</keyword>
<dbReference type="EC" id="2.7.7.101" evidence="1"/>
<dbReference type="EMBL" id="U02878">
    <property type="protein sequence ID" value="AAB81403.1"/>
    <property type="molecule type" value="Unassigned_DNA"/>
</dbReference>
<dbReference type="EMBL" id="AJ235273">
    <property type="protein sequence ID" value="CAA15283.1"/>
    <property type="status" value="ALT_INIT"/>
    <property type="molecule type" value="Genomic_DNA"/>
</dbReference>
<dbReference type="PIR" id="C71648">
    <property type="entry name" value="C71648"/>
</dbReference>
<dbReference type="RefSeq" id="NP_221207.1">
    <property type="nucleotide sequence ID" value="NC_000963.1"/>
</dbReference>
<dbReference type="RefSeq" id="WP_004596761.1">
    <property type="nucleotide sequence ID" value="NC_000963.1"/>
</dbReference>
<dbReference type="SMR" id="P30103"/>
<dbReference type="STRING" id="272947.gene:17555928"/>
<dbReference type="EnsemblBacteria" id="CAA15283">
    <property type="protein sequence ID" value="CAA15283"/>
    <property type="gene ID" value="CAA15283"/>
</dbReference>
<dbReference type="GeneID" id="57569982"/>
<dbReference type="KEGG" id="rpr:RP859"/>
<dbReference type="PATRIC" id="fig|272947.5.peg.898"/>
<dbReference type="eggNOG" id="COG0358">
    <property type="taxonomic scope" value="Bacteria"/>
</dbReference>
<dbReference type="HOGENOM" id="CLU_013501_5_3_5"/>
<dbReference type="OrthoDB" id="9803773at2"/>
<dbReference type="Proteomes" id="UP000002480">
    <property type="component" value="Chromosome"/>
</dbReference>
<dbReference type="GO" id="GO:0005737">
    <property type="term" value="C:cytoplasm"/>
    <property type="evidence" value="ECO:0007669"/>
    <property type="project" value="TreeGrafter"/>
</dbReference>
<dbReference type="GO" id="GO:0000428">
    <property type="term" value="C:DNA-directed RNA polymerase complex"/>
    <property type="evidence" value="ECO:0007669"/>
    <property type="project" value="UniProtKB-KW"/>
</dbReference>
<dbReference type="GO" id="GO:1990077">
    <property type="term" value="C:primosome complex"/>
    <property type="evidence" value="ECO:0007669"/>
    <property type="project" value="UniProtKB-KW"/>
</dbReference>
<dbReference type="GO" id="GO:0003677">
    <property type="term" value="F:DNA binding"/>
    <property type="evidence" value="ECO:0007669"/>
    <property type="project" value="UniProtKB-KW"/>
</dbReference>
<dbReference type="GO" id="GO:0003899">
    <property type="term" value="F:DNA-directed RNA polymerase activity"/>
    <property type="evidence" value="ECO:0007669"/>
    <property type="project" value="InterPro"/>
</dbReference>
<dbReference type="GO" id="GO:0008270">
    <property type="term" value="F:zinc ion binding"/>
    <property type="evidence" value="ECO:0007669"/>
    <property type="project" value="UniProtKB-UniRule"/>
</dbReference>
<dbReference type="GO" id="GO:0006269">
    <property type="term" value="P:DNA replication, synthesis of primer"/>
    <property type="evidence" value="ECO:0007669"/>
    <property type="project" value="UniProtKB-UniRule"/>
</dbReference>
<dbReference type="CDD" id="cd03364">
    <property type="entry name" value="TOPRIM_DnaG_primases"/>
    <property type="match status" value="1"/>
</dbReference>
<dbReference type="FunFam" id="3.40.1360.10:FF:000002">
    <property type="entry name" value="DNA primase"/>
    <property type="match status" value="1"/>
</dbReference>
<dbReference type="FunFam" id="3.90.580.10:FF:000001">
    <property type="entry name" value="DNA primase"/>
    <property type="match status" value="1"/>
</dbReference>
<dbReference type="Gene3D" id="3.40.1360.10">
    <property type="match status" value="1"/>
</dbReference>
<dbReference type="Gene3D" id="3.90.980.10">
    <property type="entry name" value="DNA primase, catalytic core, N-terminal domain"/>
    <property type="match status" value="1"/>
</dbReference>
<dbReference type="Gene3D" id="3.90.580.10">
    <property type="entry name" value="Zinc finger, CHC2-type domain"/>
    <property type="match status" value="1"/>
</dbReference>
<dbReference type="HAMAP" id="MF_00974">
    <property type="entry name" value="DNA_primase_DnaG"/>
    <property type="match status" value="1"/>
</dbReference>
<dbReference type="InterPro" id="IPR037068">
    <property type="entry name" value="DNA_primase_core_N_sf"/>
</dbReference>
<dbReference type="InterPro" id="IPR006295">
    <property type="entry name" value="DNA_primase_DnaG"/>
</dbReference>
<dbReference type="InterPro" id="IPR036977">
    <property type="entry name" value="DNA_primase_Znf_CHC2"/>
</dbReference>
<dbReference type="InterPro" id="IPR030846">
    <property type="entry name" value="DnaG_bac"/>
</dbReference>
<dbReference type="InterPro" id="IPR013264">
    <property type="entry name" value="DNAG_N"/>
</dbReference>
<dbReference type="InterPro" id="IPR050219">
    <property type="entry name" value="DnaG_primase"/>
</dbReference>
<dbReference type="InterPro" id="IPR034151">
    <property type="entry name" value="TOPRIM_DnaG_bac"/>
</dbReference>
<dbReference type="InterPro" id="IPR006171">
    <property type="entry name" value="TOPRIM_dom"/>
</dbReference>
<dbReference type="InterPro" id="IPR002694">
    <property type="entry name" value="Znf_CHC2"/>
</dbReference>
<dbReference type="NCBIfam" id="TIGR01391">
    <property type="entry name" value="dnaG"/>
    <property type="match status" value="1"/>
</dbReference>
<dbReference type="PANTHER" id="PTHR30313">
    <property type="entry name" value="DNA PRIMASE"/>
    <property type="match status" value="1"/>
</dbReference>
<dbReference type="PANTHER" id="PTHR30313:SF2">
    <property type="entry name" value="DNA PRIMASE"/>
    <property type="match status" value="1"/>
</dbReference>
<dbReference type="Pfam" id="PF08275">
    <property type="entry name" value="DNAG_N"/>
    <property type="match status" value="1"/>
</dbReference>
<dbReference type="Pfam" id="PF13155">
    <property type="entry name" value="Toprim_2"/>
    <property type="match status" value="1"/>
</dbReference>
<dbReference type="Pfam" id="PF01807">
    <property type="entry name" value="Zn_ribbon_DnaG"/>
    <property type="match status" value="1"/>
</dbReference>
<dbReference type="PIRSF" id="PIRSF002811">
    <property type="entry name" value="DnaG"/>
    <property type="match status" value="1"/>
</dbReference>
<dbReference type="SMART" id="SM00493">
    <property type="entry name" value="TOPRIM"/>
    <property type="match status" value="1"/>
</dbReference>
<dbReference type="SMART" id="SM00400">
    <property type="entry name" value="ZnF_CHCC"/>
    <property type="match status" value="1"/>
</dbReference>
<dbReference type="SUPFAM" id="SSF56731">
    <property type="entry name" value="DNA primase core"/>
    <property type="match status" value="1"/>
</dbReference>
<dbReference type="SUPFAM" id="SSF57783">
    <property type="entry name" value="Zinc beta-ribbon"/>
    <property type="match status" value="1"/>
</dbReference>
<dbReference type="PROSITE" id="PS50880">
    <property type="entry name" value="TOPRIM"/>
    <property type="match status" value="1"/>
</dbReference>
<proteinExistence type="inferred from homology"/>
<gene>
    <name evidence="1" type="primary">dnaG</name>
    <name type="ordered locus">RP859</name>
</gene>
<accession>P30103</accession>
<evidence type="ECO:0000255" key="1">
    <source>
        <dbReference type="HAMAP-Rule" id="MF_00974"/>
    </source>
</evidence>
<evidence type="ECO:0000305" key="2"/>